<protein>
    <recommendedName>
        <fullName evidence="1">Protein SprT-like</fullName>
    </recommendedName>
</protein>
<keyword id="KW-0963">Cytoplasm</keyword>
<keyword id="KW-0479">Metal-binding</keyword>
<keyword id="KW-0862">Zinc</keyword>
<sequence>MNNDKLQRMVENLSEEKFGRTFRHCAYFNKRLRTTGGRYLLKSHDIEINPKQYEHYGEDAVVKIILHELCHYHLHIAGKGYQHKDQDFKRLSQQVGAPRFCNSIESYQQRANYEYYCTKCHAKYIRIRKVDTNRMRCGHCNGKLRMKRQLK</sequence>
<evidence type="ECO:0000255" key="1">
    <source>
        <dbReference type="HAMAP-Rule" id="MF_00745"/>
    </source>
</evidence>
<name>SPRTL_STAA9</name>
<proteinExistence type="inferred from homology"/>
<accession>A5IUK8</accession>
<reference key="1">
    <citation type="submission" date="2007-05" db="EMBL/GenBank/DDBJ databases">
        <title>Complete sequence of chromosome of Staphylococcus aureus subsp. aureus JH9.</title>
        <authorList>
            <consortium name="US DOE Joint Genome Institute"/>
            <person name="Copeland A."/>
            <person name="Lucas S."/>
            <person name="Lapidus A."/>
            <person name="Barry K."/>
            <person name="Detter J.C."/>
            <person name="Glavina del Rio T."/>
            <person name="Hammon N."/>
            <person name="Israni S."/>
            <person name="Pitluck S."/>
            <person name="Chain P."/>
            <person name="Malfatti S."/>
            <person name="Shin M."/>
            <person name="Vergez L."/>
            <person name="Schmutz J."/>
            <person name="Larimer F."/>
            <person name="Land M."/>
            <person name="Hauser L."/>
            <person name="Kyrpides N."/>
            <person name="Kim E."/>
            <person name="Tomasz A."/>
            <person name="Richardson P."/>
        </authorList>
    </citation>
    <scope>NUCLEOTIDE SEQUENCE [LARGE SCALE GENOMIC DNA]</scope>
    <source>
        <strain>JH9</strain>
    </source>
</reference>
<comment type="cofactor">
    <cofactor evidence="1">
        <name>Zn(2+)</name>
        <dbReference type="ChEBI" id="CHEBI:29105"/>
    </cofactor>
    <text evidence="1">Binds 1 zinc ion.</text>
</comment>
<comment type="subcellular location">
    <subcellularLocation>
        <location evidence="1">Cytoplasm</location>
    </subcellularLocation>
</comment>
<comment type="similarity">
    <text evidence="1">Belongs to the SprT family.</text>
</comment>
<gene>
    <name type="ordered locus">SaurJH9_2099</name>
</gene>
<organism>
    <name type="scientific">Staphylococcus aureus (strain JH9)</name>
    <dbReference type="NCBI Taxonomy" id="359786"/>
    <lineage>
        <taxon>Bacteria</taxon>
        <taxon>Bacillati</taxon>
        <taxon>Bacillota</taxon>
        <taxon>Bacilli</taxon>
        <taxon>Bacillales</taxon>
        <taxon>Staphylococcaceae</taxon>
        <taxon>Staphylococcus</taxon>
    </lineage>
</organism>
<dbReference type="EMBL" id="CP000703">
    <property type="protein sequence ID" value="ABQ49881.1"/>
    <property type="molecule type" value="Genomic_DNA"/>
</dbReference>
<dbReference type="RefSeq" id="WP_001058111.1">
    <property type="nucleotide sequence ID" value="NC_009487.1"/>
</dbReference>
<dbReference type="KEGG" id="saj:SaurJH9_2099"/>
<dbReference type="HOGENOM" id="CLU_123820_0_0_9"/>
<dbReference type="GO" id="GO:0005737">
    <property type="term" value="C:cytoplasm"/>
    <property type="evidence" value="ECO:0007669"/>
    <property type="project" value="UniProtKB-SubCell"/>
</dbReference>
<dbReference type="GO" id="GO:0008270">
    <property type="term" value="F:zinc ion binding"/>
    <property type="evidence" value="ECO:0007669"/>
    <property type="project" value="UniProtKB-UniRule"/>
</dbReference>
<dbReference type="GO" id="GO:0006950">
    <property type="term" value="P:response to stress"/>
    <property type="evidence" value="ECO:0007669"/>
    <property type="project" value="UniProtKB-ARBA"/>
</dbReference>
<dbReference type="HAMAP" id="MF_00745">
    <property type="entry name" value="SprT_like"/>
    <property type="match status" value="1"/>
</dbReference>
<dbReference type="InterPro" id="IPR006640">
    <property type="entry name" value="SprT-like_domain"/>
</dbReference>
<dbReference type="InterPro" id="IPR035240">
    <property type="entry name" value="SprT_Zn_ribbon"/>
</dbReference>
<dbReference type="InterPro" id="IPR023524">
    <property type="entry name" value="Uncharacterised_SprT-like"/>
</dbReference>
<dbReference type="NCBIfam" id="NF003339">
    <property type="entry name" value="PRK04351.1"/>
    <property type="match status" value="1"/>
</dbReference>
<dbReference type="Pfam" id="PF10263">
    <property type="entry name" value="SprT-like"/>
    <property type="match status" value="1"/>
</dbReference>
<dbReference type="Pfam" id="PF17283">
    <property type="entry name" value="Zn_ribbon_SprT"/>
    <property type="match status" value="1"/>
</dbReference>
<dbReference type="SMART" id="SM00731">
    <property type="entry name" value="SprT"/>
    <property type="match status" value="1"/>
</dbReference>
<feature type="chain" id="PRO_1000083478" description="Protein SprT-like">
    <location>
        <begin position="1"/>
        <end position="151"/>
    </location>
</feature>
<feature type="domain" description="SprT-like" evidence="1">
    <location>
        <begin position="6"/>
        <end position="147"/>
    </location>
</feature>
<feature type="active site" evidence="1">
    <location>
        <position position="68"/>
    </location>
</feature>
<feature type="binding site" evidence="1">
    <location>
        <position position="67"/>
    </location>
    <ligand>
        <name>Zn(2+)</name>
        <dbReference type="ChEBI" id="CHEBI:29105"/>
    </ligand>
</feature>
<feature type="binding site" evidence="1">
    <location>
        <position position="71"/>
    </location>
    <ligand>
        <name>Zn(2+)</name>
        <dbReference type="ChEBI" id="CHEBI:29105"/>
    </ligand>
</feature>